<dbReference type="EC" id="1.7.1.13" evidence="1"/>
<dbReference type="EMBL" id="CP000394">
    <property type="protein sequence ID" value="ABI61189.1"/>
    <property type="molecule type" value="Genomic_DNA"/>
</dbReference>
<dbReference type="RefSeq" id="WP_011630999.1">
    <property type="nucleotide sequence ID" value="NC_008343.2"/>
</dbReference>
<dbReference type="SMR" id="Q0BVG3"/>
<dbReference type="STRING" id="391165.GbCGDNIH1_0291"/>
<dbReference type="GeneID" id="69744550"/>
<dbReference type="KEGG" id="gbe:GbCGDNIH1_0291"/>
<dbReference type="eggNOG" id="COG0780">
    <property type="taxonomic scope" value="Bacteria"/>
</dbReference>
<dbReference type="HOGENOM" id="CLU_102489_0_1_5"/>
<dbReference type="OrthoDB" id="9789995at2"/>
<dbReference type="UniPathway" id="UPA00392"/>
<dbReference type="Proteomes" id="UP000001963">
    <property type="component" value="Chromosome"/>
</dbReference>
<dbReference type="GO" id="GO:0005737">
    <property type="term" value="C:cytoplasm"/>
    <property type="evidence" value="ECO:0007669"/>
    <property type="project" value="UniProtKB-SubCell"/>
</dbReference>
<dbReference type="GO" id="GO:0033739">
    <property type="term" value="F:preQ1 synthase activity"/>
    <property type="evidence" value="ECO:0007669"/>
    <property type="project" value="UniProtKB-UniRule"/>
</dbReference>
<dbReference type="GO" id="GO:0008616">
    <property type="term" value="P:queuosine biosynthetic process"/>
    <property type="evidence" value="ECO:0007669"/>
    <property type="project" value="UniProtKB-UniRule"/>
</dbReference>
<dbReference type="GO" id="GO:0006400">
    <property type="term" value="P:tRNA modification"/>
    <property type="evidence" value="ECO:0007669"/>
    <property type="project" value="UniProtKB-UniRule"/>
</dbReference>
<dbReference type="Gene3D" id="3.30.1130.10">
    <property type="match status" value="1"/>
</dbReference>
<dbReference type="HAMAP" id="MF_00818">
    <property type="entry name" value="QueF_type1"/>
    <property type="match status" value="1"/>
</dbReference>
<dbReference type="InterPro" id="IPR043133">
    <property type="entry name" value="GTP-CH-I_C/QueF"/>
</dbReference>
<dbReference type="InterPro" id="IPR050084">
    <property type="entry name" value="NADPH_dep_7-cyano-7-deazaG_red"/>
</dbReference>
<dbReference type="InterPro" id="IPR029500">
    <property type="entry name" value="QueF"/>
</dbReference>
<dbReference type="InterPro" id="IPR016856">
    <property type="entry name" value="QueF_type1"/>
</dbReference>
<dbReference type="NCBIfam" id="TIGR03139">
    <property type="entry name" value="QueF-II"/>
    <property type="match status" value="1"/>
</dbReference>
<dbReference type="PANTHER" id="PTHR34354">
    <property type="entry name" value="NADPH-DEPENDENT 7-CYANO-7-DEAZAGUANINE REDUCTASE"/>
    <property type="match status" value="1"/>
</dbReference>
<dbReference type="PANTHER" id="PTHR34354:SF1">
    <property type="entry name" value="NADPH-DEPENDENT 7-CYANO-7-DEAZAGUANINE REDUCTASE"/>
    <property type="match status" value="1"/>
</dbReference>
<dbReference type="Pfam" id="PF14489">
    <property type="entry name" value="QueF"/>
    <property type="match status" value="1"/>
</dbReference>
<dbReference type="PIRSF" id="PIRSF027377">
    <property type="entry name" value="Nitrile_oxidored_QueF"/>
    <property type="match status" value="1"/>
</dbReference>
<dbReference type="SUPFAM" id="SSF55620">
    <property type="entry name" value="Tetrahydrobiopterin biosynthesis enzymes-like"/>
    <property type="match status" value="1"/>
</dbReference>
<evidence type="ECO:0000255" key="1">
    <source>
        <dbReference type="HAMAP-Rule" id="MF_00818"/>
    </source>
</evidence>
<feature type="chain" id="PRO_1000062385" description="NADPH-dependent 7-cyano-7-deazaguanine reductase">
    <location>
        <begin position="1"/>
        <end position="153"/>
    </location>
</feature>
<feature type="active site" description="Thioimide intermediate" evidence="1">
    <location>
        <position position="51"/>
    </location>
</feature>
<feature type="active site" description="Proton donor" evidence="1">
    <location>
        <position position="58"/>
    </location>
</feature>
<feature type="binding site" evidence="1">
    <location>
        <begin position="73"/>
        <end position="75"/>
    </location>
    <ligand>
        <name>substrate</name>
    </ligand>
</feature>
<feature type="binding site" evidence="1">
    <location>
        <begin position="92"/>
        <end position="93"/>
    </location>
    <ligand>
        <name>substrate</name>
    </ligand>
</feature>
<accession>Q0BVG3</accession>
<name>QUEF_GRABC</name>
<gene>
    <name evidence="1" type="primary">queF</name>
    <name type="ordered locus">GbCGDNIH1_0291</name>
</gene>
<keyword id="KW-0963">Cytoplasm</keyword>
<keyword id="KW-0521">NADP</keyword>
<keyword id="KW-0560">Oxidoreductase</keyword>
<keyword id="KW-0671">Queuosine biosynthesis</keyword>
<keyword id="KW-1185">Reference proteome</keyword>
<organism>
    <name type="scientific">Granulibacter bethesdensis (strain ATCC BAA-1260 / CGDNIH1)</name>
    <dbReference type="NCBI Taxonomy" id="391165"/>
    <lineage>
        <taxon>Bacteria</taxon>
        <taxon>Pseudomonadati</taxon>
        <taxon>Pseudomonadota</taxon>
        <taxon>Alphaproteobacteria</taxon>
        <taxon>Acetobacterales</taxon>
        <taxon>Acetobacteraceae</taxon>
        <taxon>Granulibacter</taxon>
    </lineage>
</organism>
<sequence>MAENYAGLTQLGQTVSQPASPDQAVLEKVPNPTPGKAYMIRFTAPEFTSLCPLTGQPDFAHIVLDYVPRDWIVESKSLKLFLTSFRNVGSFHEACSMKIAERVVSLLDPVWLRIGAYWYPRGGIPIDVFWQTGSPPDGVWIPAQDVPGYRGRG</sequence>
<protein>
    <recommendedName>
        <fullName evidence="1">NADPH-dependent 7-cyano-7-deazaguanine reductase</fullName>
        <ecNumber evidence="1">1.7.1.13</ecNumber>
    </recommendedName>
    <alternativeName>
        <fullName evidence="1">7-cyano-7-carbaguanine reductase</fullName>
    </alternativeName>
    <alternativeName>
        <fullName evidence="1">NADPH-dependent nitrile oxidoreductase</fullName>
    </alternativeName>
    <alternativeName>
        <fullName evidence="1">PreQ(0) reductase</fullName>
    </alternativeName>
</protein>
<comment type="function">
    <text evidence="1">Catalyzes the NADPH-dependent reduction of 7-cyano-7-deazaguanine (preQ0) to 7-aminomethyl-7-deazaguanine (preQ1).</text>
</comment>
<comment type="catalytic activity">
    <reaction evidence="1">
        <text>7-aminomethyl-7-carbaguanine + 2 NADP(+) = 7-cyano-7-deazaguanine + 2 NADPH + 3 H(+)</text>
        <dbReference type="Rhea" id="RHEA:13409"/>
        <dbReference type="ChEBI" id="CHEBI:15378"/>
        <dbReference type="ChEBI" id="CHEBI:45075"/>
        <dbReference type="ChEBI" id="CHEBI:57783"/>
        <dbReference type="ChEBI" id="CHEBI:58349"/>
        <dbReference type="ChEBI" id="CHEBI:58703"/>
        <dbReference type="EC" id="1.7.1.13"/>
    </reaction>
</comment>
<comment type="pathway">
    <text evidence="1">tRNA modification; tRNA-queuosine biosynthesis.</text>
</comment>
<comment type="subcellular location">
    <subcellularLocation>
        <location evidence="1">Cytoplasm</location>
    </subcellularLocation>
</comment>
<comment type="similarity">
    <text evidence="1">Belongs to the GTP cyclohydrolase I family. QueF type 1 subfamily.</text>
</comment>
<proteinExistence type="inferred from homology"/>
<reference key="1">
    <citation type="journal article" date="2007" name="J. Bacteriol.">
        <title>Genome sequence analysis of the emerging human pathogenic acetic acid bacterium Granulibacter bethesdensis.</title>
        <authorList>
            <person name="Greenberg D.E."/>
            <person name="Porcella S.F."/>
            <person name="Zelazny A.M."/>
            <person name="Virtaneva K."/>
            <person name="Sturdevant D.E."/>
            <person name="Kupko J.J. III"/>
            <person name="Barbian K.D."/>
            <person name="Babar A."/>
            <person name="Dorward D.W."/>
            <person name="Holland S.M."/>
        </authorList>
    </citation>
    <scope>NUCLEOTIDE SEQUENCE [LARGE SCALE GENOMIC DNA]</scope>
    <source>
        <strain>ATCC BAA-1260 / CGDNIH1</strain>
    </source>
</reference>